<protein>
    <recommendedName>
        <fullName>Putative uncharacterized protein YLR125W</fullName>
    </recommendedName>
</protein>
<name>YL125_YEAST</name>
<accession>Q12138</accession>
<accession>D6VYC0</accession>
<gene>
    <name type="ordered locus">YLR125W</name>
    <name type="ORF">L3101</name>
</gene>
<dbReference type="EMBL" id="X89514">
    <property type="protein sequence ID" value="CAA61703.1"/>
    <property type="molecule type" value="Genomic_DNA"/>
</dbReference>
<dbReference type="EMBL" id="U53877">
    <property type="protein sequence ID" value="AAB82371.1"/>
    <property type="molecule type" value="Genomic_DNA"/>
</dbReference>
<dbReference type="EMBL" id="X91258">
    <property type="protein sequence ID" value="CAA62636.1"/>
    <property type="molecule type" value="Genomic_DNA"/>
</dbReference>
<dbReference type="EMBL" id="Z73297">
    <property type="protein sequence ID" value="CAA97694.1"/>
    <property type="molecule type" value="Genomic_DNA"/>
</dbReference>
<dbReference type="EMBL" id="BK006945">
    <property type="protein sequence ID" value="DAA09436.1"/>
    <property type="molecule type" value="Genomic_DNA"/>
</dbReference>
<dbReference type="PIR" id="S59313">
    <property type="entry name" value="S59313"/>
</dbReference>
<dbReference type="RefSeq" id="NP_013226.1">
    <property type="nucleotide sequence ID" value="NM_001182012.1"/>
</dbReference>
<dbReference type="SMR" id="Q12138"/>
<dbReference type="BioGRID" id="31394">
    <property type="interactions" value="32"/>
</dbReference>
<dbReference type="DIP" id="DIP-2046N"/>
<dbReference type="FunCoup" id="Q12138">
    <property type="interactions" value="48"/>
</dbReference>
<dbReference type="STRING" id="4932.YLR125W"/>
<dbReference type="PaxDb" id="4932-YLR125W"/>
<dbReference type="PeptideAtlas" id="Q12138"/>
<dbReference type="EnsemblFungi" id="YLR125W_mRNA">
    <property type="protein sequence ID" value="YLR125W"/>
    <property type="gene ID" value="YLR125W"/>
</dbReference>
<dbReference type="GeneID" id="850816"/>
<dbReference type="KEGG" id="sce:YLR125W"/>
<dbReference type="AGR" id="SGD:S000004115"/>
<dbReference type="SGD" id="S000004115">
    <property type="gene designation" value="YLR125W"/>
</dbReference>
<dbReference type="VEuPathDB" id="FungiDB:YLR125W"/>
<dbReference type="HOGENOM" id="CLU_1939742_0_0_1"/>
<dbReference type="InParanoid" id="Q12138"/>
<dbReference type="OMA" id="WPDGVIT"/>
<dbReference type="OrthoDB" id="4061784at2759"/>
<dbReference type="BioCyc" id="YEAST:G3O-32267-MONOMER"/>
<dbReference type="BioGRID-ORCS" id="850816">
    <property type="hits" value="1 hit in 10 CRISPR screens"/>
</dbReference>
<dbReference type="PRO" id="PR:Q12138"/>
<dbReference type="Proteomes" id="UP000002311">
    <property type="component" value="Chromosome XII"/>
</dbReference>
<dbReference type="RNAct" id="Q12138">
    <property type="molecule type" value="protein"/>
</dbReference>
<proteinExistence type="predicted"/>
<feature type="chain" id="PRO_0000247351" description="Putative uncharacterized protein YLR125W">
    <location>
        <begin position="1"/>
        <end position="136"/>
    </location>
</feature>
<feature type="region of interest" description="Disordered" evidence="1">
    <location>
        <begin position="23"/>
        <end position="44"/>
    </location>
</feature>
<feature type="region of interest" description="Disordered" evidence="1">
    <location>
        <begin position="56"/>
        <end position="95"/>
    </location>
</feature>
<feature type="compositionally biased region" description="Low complexity" evidence="1">
    <location>
        <begin position="61"/>
        <end position="79"/>
    </location>
</feature>
<feature type="compositionally biased region" description="Acidic residues" evidence="1">
    <location>
        <begin position="80"/>
        <end position="91"/>
    </location>
</feature>
<sequence>MGEILELTNKNFMSHLKKDITSQESLKSRIEDKNGDVASPKEDNYPLLNETAAWPDGVITSEEGCSSSGEKENSGLCSEESSEEDPEEAEEESARAFGELVAVLRDKDIPLNVLDEPQMKDWLEKYTGVYRSSWHG</sequence>
<keyword id="KW-1185">Reference proteome</keyword>
<reference key="1">
    <citation type="journal article" date="1997" name="Yeast">
        <title>Sequence analysis of a 37.6 kbp cosmid clone from the right arm of Saccharomyces cerevisiae chromosome XII, carrying YAP3, HOG1, SNR6, tRNA-Arg3 and 23 new open reading frames, among which several homologies to proteins involved in cell division control and to mammalian growth factors and other animal proteins are found.</title>
        <authorList>
            <person name="Verhasselt P."/>
            <person name="Volckaert G."/>
        </authorList>
    </citation>
    <scope>NUCLEOTIDE SEQUENCE [GENOMIC DNA]</scope>
    <source>
        <strain>ATCC 90840 / EAY235 / FY23</strain>
    </source>
</reference>
<reference key="2">
    <citation type="journal article" date="1997" name="Nature">
        <title>The nucleotide sequence of Saccharomyces cerevisiae chromosome XII.</title>
        <authorList>
            <person name="Johnston M."/>
            <person name="Hillier L.W."/>
            <person name="Riles L."/>
            <person name="Albermann K."/>
            <person name="Andre B."/>
            <person name="Ansorge W."/>
            <person name="Benes V."/>
            <person name="Brueckner M."/>
            <person name="Delius H."/>
            <person name="Dubois E."/>
            <person name="Duesterhoeft A."/>
            <person name="Entian K.-D."/>
            <person name="Floeth M."/>
            <person name="Goffeau A."/>
            <person name="Hebling U."/>
            <person name="Heumann K."/>
            <person name="Heuss-Neitzel D."/>
            <person name="Hilbert H."/>
            <person name="Hilger F."/>
            <person name="Kleine K."/>
            <person name="Koetter P."/>
            <person name="Louis E.J."/>
            <person name="Messenguy F."/>
            <person name="Mewes H.-W."/>
            <person name="Miosga T."/>
            <person name="Moestl D."/>
            <person name="Mueller-Auer S."/>
            <person name="Nentwich U."/>
            <person name="Obermaier B."/>
            <person name="Piravandi E."/>
            <person name="Pohl T.M."/>
            <person name="Portetelle D."/>
            <person name="Purnelle B."/>
            <person name="Rechmann S."/>
            <person name="Rieger M."/>
            <person name="Rinke M."/>
            <person name="Rose M."/>
            <person name="Scharfe M."/>
            <person name="Scherens B."/>
            <person name="Scholler P."/>
            <person name="Schwager C."/>
            <person name="Schwarz S."/>
            <person name="Underwood A.P."/>
            <person name="Urrestarazu L.A."/>
            <person name="Vandenbol M."/>
            <person name="Verhasselt P."/>
            <person name="Vierendeels F."/>
            <person name="Voet M."/>
            <person name="Volckaert G."/>
            <person name="Voss H."/>
            <person name="Wambutt R."/>
            <person name="Wedler E."/>
            <person name="Wedler H."/>
            <person name="Zimmermann F.K."/>
            <person name="Zollner A."/>
            <person name="Hani J."/>
            <person name="Hoheisel J.D."/>
        </authorList>
    </citation>
    <scope>NUCLEOTIDE SEQUENCE [LARGE SCALE GENOMIC DNA]</scope>
    <source>
        <strain>ATCC 204508 / S288c</strain>
    </source>
</reference>
<reference key="3">
    <citation type="journal article" date="2014" name="G3 (Bethesda)">
        <title>The reference genome sequence of Saccharomyces cerevisiae: Then and now.</title>
        <authorList>
            <person name="Engel S.R."/>
            <person name="Dietrich F.S."/>
            <person name="Fisk D.G."/>
            <person name="Binkley G."/>
            <person name="Balakrishnan R."/>
            <person name="Costanzo M.C."/>
            <person name="Dwight S.S."/>
            <person name="Hitz B.C."/>
            <person name="Karra K."/>
            <person name="Nash R.S."/>
            <person name="Weng S."/>
            <person name="Wong E.D."/>
            <person name="Lloyd P."/>
            <person name="Skrzypek M.S."/>
            <person name="Miyasato S.R."/>
            <person name="Simison M."/>
            <person name="Cherry J.M."/>
        </authorList>
    </citation>
    <scope>GENOME REANNOTATION</scope>
    <source>
        <strain>ATCC 204508 / S288c</strain>
    </source>
</reference>
<organism>
    <name type="scientific">Saccharomyces cerevisiae (strain ATCC 204508 / S288c)</name>
    <name type="common">Baker's yeast</name>
    <dbReference type="NCBI Taxonomy" id="559292"/>
    <lineage>
        <taxon>Eukaryota</taxon>
        <taxon>Fungi</taxon>
        <taxon>Dikarya</taxon>
        <taxon>Ascomycota</taxon>
        <taxon>Saccharomycotina</taxon>
        <taxon>Saccharomycetes</taxon>
        <taxon>Saccharomycetales</taxon>
        <taxon>Saccharomycetaceae</taxon>
        <taxon>Saccharomyces</taxon>
    </lineage>
</organism>
<evidence type="ECO:0000256" key="1">
    <source>
        <dbReference type="SAM" id="MobiDB-lite"/>
    </source>
</evidence>